<proteinExistence type="inferred from homology"/>
<feature type="signal peptide" evidence="2">
    <location>
        <begin position="1"/>
        <end position="19"/>
    </location>
</feature>
<feature type="propeptide" id="PRO_0000412435" evidence="1">
    <location>
        <begin position="20"/>
        <end position="88"/>
    </location>
</feature>
<feature type="chain" id="PRO_0000412436" description="Leucine aminopeptidase 1">
    <location>
        <begin position="89"/>
        <end position="389"/>
    </location>
</feature>
<feature type="binding site" evidence="1">
    <location>
        <position position="189"/>
    </location>
    <ligand>
        <name>Zn(2+)</name>
        <dbReference type="ChEBI" id="CHEBI:29105"/>
        <label>1</label>
    </ligand>
</feature>
<feature type="binding site" evidence="1">
    <location>
        <position position="208"/>
    </location>
    <ligand>
        <name>Zn(2+)</name>
        <dbReference type="ChEBI" id="CHEBI:29105"/>
        <label>1</label>
    </ligand>
</feature>
<feature type="binding site" evidence="1">
    <location>
        <position position="208"/>
    </location>
    <ligand>
        <name>Zn(2+)</name>
        <dbReference type="ChEBI" id="CHEBI:29105"/>
        <label>2</label>
        <note>catalytic</note>
    </ligand>
</feature>
<feature type="binding site" evidence="1">
    <location>
        <position position="247"/>
    </location>
    <ligand>
        <name>Zn(2+)</name>
        <dbReference type="ChEBI" id="CHEBI:29105"/>
        <label>2</label>
        <note>catalytic</note>
    </ligand>
</feature>
<feature type="binding site" evidence="1">
    <location>
        <position position="274"/>
    </location>
    <ligand>
        <name>Zn(2+)</name>
        <dbReference type="ChEBI" id="CHEBI:29105"/>
        <label>1</label>
    </ligand>
</feature>
<feature type="binding site" evidence="1">
    <location>
        <position position="356"/>
    </location>
    <ligand>
        <name>Zn(2+)</name>
        <dbReference type="ChEBI" id="CHEBI:29105"/>
        <label>2</label>
        <note>catalytic</note>
    </ligand>
</feature>
<feature type="glycosylation site" description="N-linked (GlcNAc...) asparagine" evidence="2">
    <location>
        <position position="96"/>
    </location>
</feature>
<feature type="glycosylation site" description="N-linked (GlcNAc...) asparagine" evidence="2">
    <location>
        <position position="119"/>
    </location>
</feature>
<feature type="glycosylation site" description="N-linked (GlcNAc...) asparagine" evidence="2">
    <location>
        <position position="149"/>
    </location>
</feature>
<feature type="glycosylation site" description="N-linked (GlcNAc...) asparagine" evidence="2">
    <location>
        <position position="164"/>
    </location>
</feature>
<feature type="glycosylation site" description="N-linked (GlcNAc...) asparagine" evidence="2">
    <location>
        <position position="181"/>
    </location>
</feature>
<feature type="glycosylation site" description="N-linked (GlcNAc...) asparagine" evidence="2">
    <location>
        <position position="233"/>
    </location>
</feature>
<feature type="disulfide bond" evidence="1">
    <location>
        <begin position="323"/>
        <end position="327"/>
    </location>
</feature>
<accession>C1GMY8</accession>
<gene>
    <name type="primary">LAP1</name>
    <name type="ORF">PADG_08639</name>
</gene>
<comment type="function">
    <text evidence="1">Extracellular aminopeptidase that allows assimilation of proteinaceous substrates.</text>
</comment>
<comment type="cofactor">
    <cofactor evidence="1">
        <name>Zn(2+)</name>
        <dbReference type="ChEBI" id="CHEBI:29105"/>
    </cofactor>
    <text evidence="1">Binds 2 Zn(2+) ions per subunit.</text>
</comment>
<comment type="subunit">
    <text evidence="1">Monomer.</text>
</comment>
<comment type="subcellular location">
    <subcellularLocation>
        <location evidence="1">Secreted</location>
    </subcellularLocation>
</comment>
<comment type="similarity">
    <text evidence="3">Belongs to the peptidase M28 family. M28E subfamily.</text>
</comment>
<organism>
    <name type="scientific">Paracoccidioides brasiliensis (strain Pb18)</name>
    <dbReference type="NCBI Taxonomy" id="502780"/>
    <lineage>
        <taxon>Eukaryota</taxon>
        <taxon>Fungi</taxon>
        <taxon>Dikarya</taxon>
        <taxon>Ascomycota</taxon>
        <taxon>Pezizomycotina</taxon>
        <taxon>Eurotiomycetes</taxon>
        <taxon>Eurotiomycetidae</taxon>
        <taxon>Onygenales</taxon>
        <taxon>Ajellomycetaceae</taxon>
        <taxon>Paracoccidioides</taxon>
    </lineage>
</organism>
<reference key="1">
    <citation type="journal article" date="2011" name="PLoS Genet.">
        <title>Comparative genomic analysis of human fungal pathogens causing paracoccidioidomycosis.</title>
        <authorList>
            <person name="Desjardins C.A."/>
            <person name="Champion M.D."/>
            <person name="Holder J.W."/>
            <person name="Muszewska A."/>
            <person name="Goldberg J."/>
            <person name="Bailao A.M."/>
            <person name="Brigido M.M."/>
            <person name="Ferreira M.E."/>
            <person name="Garcia A.M."/>
            <person name="Grynberg M."/>
            <person name="Gujja S."/>
            <person name="Heiman D.I."/>
            <person name="Henn M.R."/>
            <person name="Kodira C.D."/>
            <person name="Leon-Narvaez H."/>
            <person name="Longo L.V.G."/>
            <person name="Ma L.-J."/>
            <person name="Malavazi I."/>
            <person name="Matsuo A.L."/>
            <person name="Morais F.V."/>
            <person name="Pereira M."/>
            <person name="Rodriguez-Brito S."/>
            <person name="Sakthikumar S."/>
            <person name="Salem-Izacc S.M."/>
            <person name="Sykes S.M."/>
            <person name="Teixeira M.M."/>
            <person name="Vallejo M.C."/>
            <person name="Walter M.E."/>
            <person name="Yandava C."/>
            <person name="Young S."/>
            <person name="Zeng Q."/>
            <person name="Zucker J."/>
            <person name="Felipe M.S."/>
            <person name="Goldman G.H."/>
            <person name="Haas B.J."/>
            <person name="McEwen J.G."/>
            <person name="Nino-Vega G."/>
            <person name="Puccia R."/>
            <person name="San-Blas G."/>
            <person name="Soares C.M."/>
            <person name="Birren B.W."/>
            <person name="Cuomo C.A."/>
        </authorList>
    </citation>
    <scope>NUCLEOTIDE SEQUENCE [LARGE SCALE GENOMIC DNA]</scope>
    <source>
        <strain>Pb18</strain>
    </source>
</reference>
<keyword id="KW-0031">Aminopeptidase</keyword>
<keyword id="KW-1015">Disulfide bond</keyword>
<keyword id="KW-0325">Glycoprotein</keyword>
<keyword id="KW-0378">Hydrolase</keyword>
<keyword id="KW-0479">Metal-binding</keyword>
<keyword id="KW-0645">Protease</keyword>
<keyword id="KW-1185">Reference proteome</keyword>
<keyword id="KW-0964">Secreted</keyword>
<keyword id="KW-0732">Signal</keyword>
<keyword id="KW-0862">Zinc</keyword>
<keyword id="KW-0865">Zymogen</keyword>
<name>LAP1_PARBD</name>
<evidence type="ECO:0000250" key="1"/>
<evidence type="ECO:0000255" key="2"/>
<evidence type="ECO:0000305" key="3"/>
<protein>
    <recommendedName>
        <fullName>Leucine aminopeptidase 1</fullName>
        <ecNumber>3.4.11.-</ecNumber>
    </recommendedName>
    <alternativeName>
        <fullName>Leucyl aminopeptidase 1</fullName>
        <shortName>LAP1</shortName>
    </alternativeName>
</protein>
<sequence length="389" mass="43192">MKLPALLTLGVAASTMVLAAIAPDQVPLNDAKKDELPEKFLIELAPGDTRWVTEDEKWELKREGLKFFDITAEVEQGFLPKVFPTPAVVNFPSELNRTAEVKQLASQLSKENMFNHLTNFTSFHTRYYKSTAGTQSATWLFEQVQQTVNNSLAVKYGAKVETFNHSWSQFSIIASIPGRTNKTVVVGAHQDSINMYLPTIMAAPGADDDGSGTVTILEALRVLLQSDAVAQGNATNTIEFHWYSAEEAGLLGSQAVFSKYKNENRDIKSMLQQDMTGYSQGTLDAGEQESVGVITDYVHSGLTEFIMKVVTGYCDIPFVLTKCGYACSDHASASRYGYPSAFVIESKFEHSSQRIHTMWDTVEYLDFDHMLQHAKMTLGLVYELAFAEL</sequence>
<dbReference type="EC" id="3.4.11.-"/>
<dbReference type="EMBL" id="KN275981">
    <property type="protein sequence ID" value="EEH44990.1"/>
    <property type="molecule type" value="Genomic_DNA"/>
</dbReference>
<dbReference type="RefSeq" id="XP_010763940.1">
    <property type="nucleotide sequence ID" value="XM_010765638.1"/>
</dbReference>
<dbReference type="SMR" id="C1GMY8"/>
<dbReference type="FunCoup" id="C1GMY8">
    <property type="interactions" value="24"/>
</dbReference>
<dbReference type="STRING" id="502780.C1GMY8"/>
<dbReference type="MEROPS" id="M28.022"/>
<dbReference type="GlyCosmos" id="C1GMY8">
    <property type="glycosylation" value="6 sites, No reported glycans"/>
</dbReference>
<dbReference type="GeneID" id="22586856"/>
<dbReference type="KEGG" id="pbn:PADG_08639"/>
<dbReference type="VEuPathDB" id="FungiDB:PADG_08639"/>
<dbReference type="eggNOG" id="KOG2195">
    <property type="taxonomic scope" value="Eukaryota"/>
</dbReference>
<dbReference type="HOGENOM" id="CLU_025866_0_0_1"/>
<dbReference type="InParanoid" id="C1GMY8"/>
<dbReference type="OMA" id="GMLQQDM"/>
<dbReference type="OrthoDB" id="25585at33183"/>
<dbReference type="Proteomes" id="UP000001628">
    <property type="component" value="Unassembled WGS sequence"/>
</dbReference>
<dbReference type="GO" id="GO:0005576">
    <property type="term" value="C:extracellular region"/>
    <property type="evidence" value="ECO:0007669"/>
    <property type="project" value="UniProtKB-SubCell"/>
</dbReference>
<dbReference type="GO" id="GO:0004177">
    <property type="term" value="F:aminopeptidase activity"/>
    <property type="evidence" value="ECO:0007669"/>
    <property type="project" value="UniProtKB-KW"/>
</dbReference>
<dbReference type="GO" id="GO:0046872">
    <property type="term" value="F:metal ion binding"/>
    <property type="evidence" value="ECO:0007669"/>
    <property type="project" value="UniProtKB-KW"/>
</dbReference>
<dbReference type="GO" id="GO:0008235">
    <property type="term" value="F:metalloexopeptidase activity"/>
    <property type="evidence" value="ECO:0007669"/>
    <property type="project" value="InterPro"/>
</dbReference>
<dbReference type="GO" id="GO:0006508">
    <property type="term" value="P:proteolysis"/>
    <property type="evidence" value="ECO:0007669"/>
    <property type="project" value="UniProtKB-KW"/>
</dbReference>
<dbReference type="CDD" id="cd03879">
    <property type="entry name" value="M28_AAP"/>
    <property type="match status" value="1"/>
</dbReference>
<dbReference type="FunFam" id="3.40.630.10:FF:000042">
    <property type="entry name" value="Peptide hydrolase"/>
    <property type="match status" value="1"/>
</dbReference>
<dbReference type="Gene3D" id="3.40.630.10">
    <property type="entry name" value="Zn peptidases"/>
    <property type="match status" value="1"/>
</dbReference>
<dbReference type="InterPro" id="IPR045175">
    <property type="entry name" value="M28_fam"/>
</dbReference>
<dbReference type="InterPro" id="IPR007484">
    <property type="entry name" value="Peptidase_M28"/>
</dbReference>
<dbReference type="PANTHER" id="PTHR12147:SF56">
    <property type="entry name" value="AMINOPEPTIDASE YDR415C-RELATED"/>
    <property type="match status" value="1"/>
</dbReference>
<dbReference type="PANTHER" id="PTHR12147">
    <property type="entry name" value="METALLOPEPTIDASE M28 FAMILY MEMBER"/>
    <property type="match status" value="1"/>
</dbReference>
<dbReference type="Pfam" id="PF04389">
    <property type="entry name" value="Peptidase_M28"/>
    <property type="match status" value="1"/>
</dbReference>
<dbReference type="SUPFAM" id="SSF53187">
    <property type="entry name" value="Zn-dependent exopeptidases"/>
    <property type="match status" value="1"/>
</dbReference>